<comment type="function">
    <text evidence="2">Catalyzes the reduction of Delta(1)-pyrroline-2-carboxylate (Pyr2C) to L-proline, using NADPH as the electron donor. May be involved in a degradation pathway that converts trans-3-hydroxy-L-proline (t3LHyp) to L-proline.</text>
</comment>
<comment type="catalytic activity">
    <reaction evidence="2">
        <text>L-proline + NAD(+) = 1-pyrroline-2-carboxylate + NADH + H(+)</text>
        <dbReference type="Rhea" id="RHEA:20321"/>
        <dbReference type="ChEBI" id="CHEBI:15378"/>
        <dbReference type="ChEBI" id="CHEBI:39785"/>
        <dbReference type="ChEBI" id="CHEBI:57540"/>
        <dbReference type="ChEBI" id="CHEBI:57945"/>
        <dbReference type="ChEBI" id="CHEBI:60039"/>
        <dbReference type="EC" id="1.5.1.49"/>
    </reaction>
</comment>
<comment type="catalytic activity">
    <reaction evidence="2">
        <text>L-proline + NADP(+) = 1-pyrroline-2-carboxylate + NADPH + H(+)</text>
        <dbReference type="Rhea" id="RHEA:20317"/>
        <dbReference type="ChEBI" id="CHEBI:15378"/>
        <dbReference type="ChEBI" id="CHEBI:39785"/>
        <dbReference type="ChEBI" id="CHEBI:57783"/>
        <dbReference type="ChEBI" id="CHEBI:58349"/>
        <dbReference type="ChEBI" id="CHEBI:60039"/>
        <dbReference type="EC" id="1.5.1.49"/>
    </reaction>
</comment>
<comment type="biophysicochemical properties">
    <kinetics>
        <KM evidence="2">1.1 mM for Delta(1)-pyrroline-2-carboxylate (using NADPH as cosubstrate)</KM>
        <text evidence="2">kcat is 20 sec(-1) for Pyr2C reduction using NADPH.</text>
    </kinetics>
</comment>
<comment type="subunit">
    <text evidence="1">Homodimer.</text>
</comment>
<comment type="similarity">
    <text evidence="4">Belongs to the LDH2/MDH2 oxidoreductase family.</text>
</comment>
<gene>
    <name evidence="5" type="ordered locus">PFL_1416</name>
</gene>
<sequence>MSEYITLSLDEVCALSYQVLTRHGLSDAHARAIAEVITQGQRDECHSHGVYRLLGCVRSVREGRIDPRAEPSLRHVSPGVLEVDAHYGYSLLGFHTGLPILAEKARSQGIAAMVIKRCFHFSALWPEVEAIADYGLVGMAMNPSHSWVAPAGGRQPVFGTNPLAFAWPRPGGQPFVFDFATSAIARGDIELHARQGKPIPEHWAIDADGQPTTDAKAALQGAMQTFGGHKGSALAAMIELLAGALIGDLTSAESMAFDGGVGATPCHGELVLAFDPRVFLGEGYEQGLERAEGLFAAIARQGARLPSQRRFAARARSLEHGVQIPRGLLEDIRGLL</sequence>
<protein>
    <recommendedName>
        <fullName>Delta(1)-pyrroline-2-carboxylate reductase</fullName>
        <shortName>Pyr2C reductase</shortName>
        <ecNumber evidence="2">1.5.1.49</ecNumber>
    </recommendedName>
    <alternativeName>
        <fullName evidence="3">Proline ketimine reductase</fullName>
    </alternativeName>
</protein>
<accession>Q4KGT8</accession>
<evidence type="ECO:0000250" key="1">
    <source>
        <dbReference type="UniProtKB" id="Q4U331"/>
    </source>
</evidence>
<evidence type="ECO:0000269" key="2">
    <source>
    </source>
</evidence>
<evidence type="ECO:0000303" key="3">
    <source>
    </source>
</evidence>
<evidence type="ECO:0000305" key="4"/>
<evidence type="ECO:0000312" key="5">
    <source>
        <dbReference type="EMBL" id="AAY90701.1"/>
    </source>
</evidence>
<keyword id="KW-0521">NADP</keyword>
<keyword id="KW-0560">Oxidoreductase</keyword>
<organism>
    <name type="scientific">Pseudomonas fluorescens (strain ATCC BAA-477 / NRRL B-23932 / Pf-5)</name>
    <dbReference type="NCBI Taxonomy" id="220664"/>
    <lineage>
        <taxon>Bacteria</taxon>
        <taxon>Pseudomonadati</taxon>
        <taxon>Pseudomonadota</taxon>
        <taxon>Gammaproteobacteria</taxon>
        <taxon>Pseudomonadales</taxon>
        <taxon>Pseudomonadaceae</taxon>
        <taxon>Pseudomonas</taxon>
    </lineage>
</organism>
<dbReference type="EC" id="1.5.1.49" evidence="2"/>
<dbReference type="EMBL" id="CP000076">
    <property type="protein sequence ID" value="AAY90701.1"/>
    <property type="molecule type" value="Genomic_DNA"/>
</dbReference>
<dbReference type="RefSeq" id="WP_011059758.1">
    <property type="nucleotide sequence ID" value="NC_004129.6"/>
</dbReference>
<dbReference type="SMR" id="Q4KGT8"/>
<dbReference type="STRING" id="220664.PFL_1416"/>
<dbReference type="KEGG" id="pfl:PFL_1416"/>
<dbReference type="PATRIC" id="fig|220664.5.peg.1450"/>
<dbReference type="eggNOG" id="COG2055">
    <property type="taxonomic scope" value="Bacteria"/>
</dbReference>
<dbReference type="HOGENOM" id="CLU_040452_0_0_6"/>
<dbReference type="SABIO-RK" id="Q4KGT8"/>
<dbReference type="Proteomes" id="UP000008540">
    <property type="component" value="Chromosome"/>
</dbReference>
<dbReference type="GO" id="GO:0016491">
    <property type="term" value="F:oxidoreductase activity"/>
    <property type="evidence" value="ECO:0007669"/>
    <property type="project" value="UniProtKB-KW"/>
</dbReference>
<dbReference type="Gene3D" id="1.10.1530.10">
    <property type="match status" value="1"/>
</dbReference>
<dbReference type="Gene3D" id="3.30.1370.60">
    <property type="entry name" value="Hypothetical oxidoreductase yiak, domain 2"/>
    <property type="match status" value="1"/>
</dbReference>
<dbReference type="InterPro" id="IPR043144">
    <property type="entry name" value="Mal/L-sulf/L-lact_DH-like_ah"/>
</dbReference>
<dbReference type="InterPro" id="IPR043143">
    <property type="entry name" value="Mal/L-sulf/L-lact_DH-like_NADP"/>
</dbReference>
<dbReference type="InterPro" id="IPR036111">
    <property type="entry name" value="Mal/L-sulfo/L-lacto_DH-like_sf"/>
</dbReference>
<dbReference type="InterPro" id="IPR003767">
    <property type="entry name" value="Malate/L-lactate_DH-like"/>
</dbReference>
<dbReference type="PANTHER" id="PTHR11091:SF0">
    <property type="entry name" value="MALATE DEHYDROGENASE"/>
    <property type="match status" value="1"/>
</dbReference>
<dbReference type="PANTHER" id="PTHR11091">
    <property type="entry name" value="OXIDOREDUCTASE-RELATED"/>
    <property type="match status" value="1"/>
</dbReference>
<dbReference type="Pfam" id="PF02615">
    <property type="entry name" value="Ldh_2"/>
    <property type="match status" value="1"/>
</dbReference>
<dbReference type="SUPFAM" id="SSF89733">
    <property type="entry name" value="L-sulfolactate dehydrogenase-like"/>
    <property type="match status" value="1"/>
</dbReference>
<proteinExistence type="evidence at protein level"/>
<feature type="chain" id="PRO_0000432292" description="Delta(1)-pyrroline-2-carboxylate reductase">
    <location>
        <begin position="1"/>
        <end position="336"/>
    </location>
</feature>
<feature type="active site" description="Charge relay system" evidence="1">
    <location>
        <position position="47"/>
    </location>
</feature>
<feature type="active site" description="Proton donor" evidence="1">
    <location>
        <position position="48"/>
    </location>
</feature>
<feature type="active site" description="Charge relay system" evidence="1">
    <location>
        <position position="188"/>
    </location>
</feature>
<feature type="binding site" evidence="1">
    <location>
        <position position="52"/>
    </location>
    <ligand>
        <name>substrate</name>
    </ligand>
</feature>
<feature type="binding site" description="in other chain" evidence="1">
    <location>
        <begin position="120"/>
        <end position="124"/>
    </location>
    <ligand>
        <name>NADP(+)</name>
        <dbReference type="ChEBI" id="CHEBI:58349"/>
        <note>ligand shared between dimeric partners</note>
    </ligand>
</feature>
<feature type="binding site" evidence="1">
    <location>
        <position position="160"/>
    </location>
    <ligand>
        <name>substrate</name>
    </ligand>
</feature>
<feature type="binding site" description="in other chain" evidence="1">
    <location>
        <begin position="178"/>
        <end position="180"/>
    </location>
    <ligand>
        <name>NADP(+)</name>
        <dbReference type="ChEBI" id="CHEBI:58349"/>
        <note>ligand shared between dimeric partners</note>
    </ligand>
</feature>
<feature type="binding site" evidence="1">
    <location>
        <begin position="186"/>
        <end position="187"/>
    </location>
    <ligand>
        <name>substrate</name>
    </ligand>
</feature>
<feature type="binding site" evidence="1">
    <location>
        <begin position="229"/>
        <end position="230"/>
    </location>
    <ligand>
        <name>NADP(+)</name>
        <dbReference type="ChEBI" id="CHEBI:58349"/>
        <note>ligand shared between dimeric partners</note>
    </ligand>
</feature>
<feature type="binding site" description="in other chain" evidence="1">
    <location>
        <begin position="304"/>
        <end position="310"/>
    </location>
    <ligand>
        <name>NADP(+)</name>
        <dbReference type="ChEBI" id="CHEBI:58349"/>
        <note>ligand shared between dimeric partners</note>
    </ligand>
</feature>
<name>PY2CR_PSEF5</name>
<reference key="1">
    <citation type="journal article" date="2005" name="Nat. Biotechnol.">
        <title>Complete genome sequence of the plant commensal Pseudomonas fluorescens Pf-5.</title>
        <authorList>
            <person name="Paulsen I.T."/>
            <person name="Press C.M."/>
            <person name="Ravel J."/>
            <person name="Kobayashi D.Y."/>
            <person name="Myers G.S.A."/>
            <person name="Mavrodi D.V."/>
            <person name="DeBoy R.T."/>
            <person name="Seshadri R."/>
            <person name="Ren Q."/>
            <person name="Madupu R."/>
            <person name="Dodson R.J."/>
            <person name="Durkin A.S."/>
            <person name="Brinkac L.M."/>
            <person name="Daugherty S.C."/>
            <person name="Sullivan S.A."/>
            <person name="Rosovitz M.J."/>
            <person name="Gwinn M.L."/>
            <person name="Zhou L."/>
            <person name="Schneider D.J."/>
            <person name="Cartinhour S.W."/>
            <person name="Nelson W.C."/>
            <person name="Weidman J."/>
            <person name="Watkins K."/>
            <person name="Tran K."/>
            <person name="Khouri H."/>
            <person name="Pierson E.A."/>
            <person name="Pierson L.S. III"/>
            <person name="Thomashow L.S."/>
            <person name="Loper J.E."/>
        </authorList>
    </citation>
    <scope>NUCLEOTIDE SEQUENCE [LARGE SCALE GENOMIC DNA]</scope>
    <source>
        <strain>ATCC BAA-477 / NRRL B-23932 / Pf-5</strain>
    </source>
</reference>
<reference key="2">
    <citation type="journal article" date="2014" name="Elife">
        <title>Prediction and characterization of enzymatic activities guided by sequence similarity and genome neighborhood networks.</title>
        <authorList>
            <person name="Zhao S."/>
            <person name="Sakai A."/>
            <person name="Zhang X."/>
            <person name="Vetting M.W."/>
            <person name="Kumar R."/>
            <person name="Hillerich B."/>
            <person name="San Francisco B."/>
            <person name="Solbiati J."/>
            <person name="Steves A."/>
            <person name="Brown S."/>
            <person name="Akiva E."/>
            <person name="Barber A."/>
            <person name="Seidel R.D."/>
            <person name="Babbitt P.C."/>
            <person name="Almo S.C."/>
            <person name="Gerlt J.A."/>
            <person name="Jacobson M.P."/>
        </authorList>
    </citation>
    <scope>FUNCTION</scope>
    <scope>CATALYTIC ACTIVITY</scope>
    <scope>BIOPHYSICOCHEMICAL PROPERTIES</scope>
</reference>